<proteinExistence type="inferred from homology"/>
<sequence>MTDSDHRLPDRPGEGDPGRGRRIGIDVGSVRVGVATSDPDGVLATPVETVRREKSSDRHVRRLAQLVTELEAVEVVVGLPRTLADRTGPAAHDAIDVAEALARRIAPVPVRMADERLTTVSAQRSLREAGVRAKGQRAMIDQVAAVGILQSWLDQRRAALAAPGEGGHG</sequence>
<accession>Q1B9H9</accession>
<protein>
    <recommendedName>
        <fullName evidence="1">Putative pre-16S rRNA nuclease</fullName>
        <ecNumber evidence="1">3.1.-.-</ecNumber>
    </recommendedName>
</protein>
<dbReference type="EC" id="3.1.-.-" evidence="1"/>
<dbReference type="EMBL" id="CP000384">
    <property type="protein sequence ID" value="ABG08455.1"/>
    <property type="molecule type" value="Genomic_DNA"/>
</dbReference>
<dbReference type="SMR" id="Q1B9H9"/>
<dbReference type="KEGG" id="mmc:Mmcs_2347"/>
<dbReference type="HOGENOM" id="CLU_098240_0_1_11"/>
<dbReference type="BioCyc" id="MSP164756:G1G6O-2399-MONOMER"/>
<dbReference type="GO" id="GO:0005829">
    <property type="term" value="C:cytosol"/>
    <property type="evidence" value="ECO:0007669"/>
    <property type="project" value="TreeGrafter"/>
</dbReference>
<dbReference type="GO" id="GO:0004518">
    <property type="term" value="F:nuclease activity"/>
    <property type="evidence" value="ECO:0007669"/>
    <property type="project" value="UniProtKB-KW"/>
</dbReference>
<dbReference type="GO" id="GO:0000967">
    <property type="term" value="P:rRNA 5'-end processing"/>
    <property type="evidence" value="ECO:0007669"/>
    <property type="project" value="UniProtKB-UniRule"/>
</dbReference>
<dbReference type="CDD" id="cd16964">
    <property type="entry name" value="YqgF"/>
    <property type="match status" value="1"/>
</dbReference>
<dbReference type="FunFam" id="3.30.420.140:FF:000005">
    <property type="entry name" value="Putative pre-16S rRNA nuclease"/>
    <property type="match status" value="1"/>
</dbReference>
<dbReference type="Gene3D" id="3.30.420.140">
    <property type="entry name" value="YqgF/RNase H-like domain"/>
    <property type="match status" value="1"/>
</dbReference>
<dbReference type="HAMAP" id="MF_00651">
    <property type="entry name" value="Nuclease_YqgF"/>
    <property type="match status" value="1"/>
</dbReference>
<dbReference type="InterPro" id="IPR012337">
    <property type="entry name" value="RNaseH-like_sf"/>
</dbReference>
<dbReference type="InterPro" id="IPR005227">
    <property type="entry name" value="YqgF"/>
</dbReference>
<dbReference type="InterPro" id="IPR006641">
    <property type="entry name" value="YqgF/RNaseH-like_dom"/>
</dbReference>
<dbReference type="InterPro" id="IPR037027">
    <property type="entry name" value="YqgF/RNaseH-like_dom_sf"/>
</dbReference>
<dbReference type="NCBIfam" id="TIGR00250">
    <property type="entry name" value="RNAse_H_YqgF"/>
    <property type="match status" value="1"/>
</dbReference>
<dbReference type="PANTHER" id="PTHR33317">
    <property type="entry name" value="POLYNUCLEOTIDYL TRANSFERASE, RIBONUCLEASE H-LIKE SUPERFAMILY PROTEIN"/>
    <property type="match status" value="1"/>
</dbReference>
<dbReference type="PANTHER" id="PTHR33317:SF4">
    <property type="entry name" value="POLYNUCLEOTIDYL TRANSFERASE, RIBONUCLEASE H-LIKE SUPERFAMILY PROTEIN"/>
    <property type="match status" value="1"/>
</dbReference>
<dbReference type="Pfam" id="PF03652">
    <property type="entry name" value="RuvX"/>
    <property type="match status" value="1"/>
</dbReference>
<dbReference type="SMART" id="SM00732">
    <property type="entry name" value="YqgFc"/>
    <property type="match status" value="1"/>
</dbReference>
<dbReference type="SUPFAM" id="SSF53098">
    <property type="entry name" value="Ribonuclease H-like"/>
    <property type="match status" value="1"/>
</dbReference>
<evidence type="ECO:0000255" key="1">
    <source>
        <dbReference type="HAMAP-Rule" id="MF_00651"/>
    </source>
</evidence>
<evidence type="ECO:0000256" key="2">
    <source>
        <dbReference type="SAM" id="MobiDB-lite"/>
    </source>
</evidence>
<organism>
    <name type="scientific">Mycobacterium sp. (strain MCS)</name>
    <dbReference type="NCBI Taxonomy" id="164756"/>
    <lineage>
        <taxon>Bacteria</taxon>
        <taxon>Bacillati</taxon>
        <taxon>Actinomycetota</taxon>
        <taxon>Actinomycetes</taxon>
        <taxon>Mycobacteriales</taxon>
        <taxon>Mycobacteriaceae</taxon>
        <taxon>Mycobacterium</taxon>
    </lineage>
</organism>
<gene>
    <name type="ordered locus">Mmcs_2347</name>
</gene>
<name>YQGF_MYCSS</name>
<feature type="chain" id="PRO_1000061539" description="Putative pre-16S rRNA nuclease">
    <location>
        <begin position="1"/>
        <end position="169"/>
    </location>
</feature>
<feature type="region of interest" description="Disordered" evidence="2">
    <location>
        <begin position="1"/>
        <end position="24"/>
    </location>
</feature>
<feature type="compositionally biased region" description="Basic and acidic residues" evidence="2">
    <location>
        <begin position="1"/>
        <end position="19"/>
    </location>
</feature>
<reference key="1">
    <citation type="submission" date="2006-06" db="EMBL/GenBank/DDBJ databases">
        <title>Complete sequence of chromosome of Mycobacterium sp. MCS.</title>
        <authorList>
            <consortium name="US DOE Joint Genome Institute"/>
            <person name="Copeland A."/>
            <person name="Lucas S."/>
            <person name="Lapidus A."/>
            <person name="Barry K."/>
            <person name="Detter J.C."/>
            <person name="Glavina del Rio T."/>
            <person name="Hammon N."/>
            <person name="Israni S."/>
            <person name="Dalin E."/>
            <person name="Tice H."/>
            <person name="Pitluck S."/>
            <person name="Martinez M."/>
            <person name="Schmutz J."/>
            <person name="Larimer F."/>
            <person name="Land M."/>
            <person name="Hauser L."/>
            <person name="Kyrpides N."/>
            <person name="Kim E."/>
            <person name="Miller C.D."/>
            <person name="Hughes J.E."/>
            <person name="Anderson A.J."/>
            <person name="Sims R.C."/>
            <person name="Richardson P."/>
        </authorList>
    </citation>
    <scope>NUCLEOTIDE SEQUENCE [LARGE SCALE GENOMIC DNA]</scope>
    <source>
        <strain>MCS</strain>
    </source>
</reference>
<comment type="function">
    <text evidence="1">Could be a nuclease involved in processing of the 5'-end of pre-16S rRNA.</text>
</comment>
<comment type="subcellular location">
    <subcellularLocation>
        <location evidence="1">Cytoplasm</location>
    </subcellularLocation>
</comment>
<comment type="similarity">
    <text evidence="1">Belongs to the YqgF nuclease family.</text>
</comment>
<keyword id="KW-0963">Cytoplasm</keyword>
<keyword id="KW-0378">Hydrolase</keyword>
<keyword id="KW-0540">Nuclease</keyword>
<keyword id="KW-0690">Ribosome biogenesis</keyword>